<accession>Q80IU5</accession>
<name>X_HBVE4</name>
<sequence length="154" mass="16471">MAARLCCQLDPARDVLCLRPVGAESCGRPVSGSLGGLSSPSPSAVPADHGAHLSLRGLPVCAFSSAGPCALRFTSARRMETTVNAHQILPKVLHKRTLGLSAMSTTDLEAYFKDCLFKDWEELGEEIRLKVFVLGGCRHKLVCVPAPCNFFTSA</sequence>
<reference key="1">
    <citation type="submission" date="2002-09" db="EMBL/GenBank/DDBJ databases">
        <title>Distribution of Hepatitis B Virus (HBV) genotypes among HBV carriers in Cote d'Ivoire: complete genome sequence and phylogenetic relatedness of HBV genotype E.</title>
        <authorList>
            <person name="Suzuki S."/>
            <person name="Sugauchi F."/>
            <person name="Orito E."/>
            <person name="Kato H."/>
            <person name="Usuda S."/>
            <person name="Siransy L."/>
            <person name="Arita I."/>
            <person name="Sakamoto Y."/>
            <person name="Yoshihara N."/>
            <person name="El-Gohary A."/>
            <person name="Ueda R."/>
            <person name="Mizokami M."/>
        </authorList>
    </citation>
    <scope>NUCLEOTIDE SEQUENCE [GENOMIC DNA]</scope>
</reference>
<reference key="2">
    <citation type="journal article" date="2004" name="J. Virol.">
        <title>The enigmatic X gene of hepatitis B virus.</title>
        <authorList>
            <person name="Bouchard M.J."/>
            <person name="Schneider R.J."/>
        </authorList>
    </citation>
    <scope>REVIEW</scope>
</reference>
<reference key="3">
    <citation type="journal article" date="2006" name="Cancer Sci.">
        <title>Molecular functions and biological roles of hepatitis B virus x protein.</title>
        <authorList>
            <person name="Tang H."/>
            <person name="Oishi N."/>
            <person name="Kaneko S."/>
            <person name="Murakami S."/>
        </authorList>
    </citation>
    <scope>REVIEW</scope>
</reference>
<dbReference type="EMBL" id="AB091256">
    <property type="protein sequence ID" value="BAC65106.1"/>
    <property type="molecule type" value="Genomic_DNA"/>
</dbReference>
<dbReference type="PDB" id="3I7H">
    <property type="method" value="X-ray"/>
    <property type="resolution" value="2.90 A"/>
    <property type="chains" value="B=88-101"/>
</dbReference>
<dbReference type="PDBsum" id="3I7H"/>
<dbReference type="SMR" id="Q80IU5"/>
<dbReference type="EvolutionaryTrace" id="Q80IU5"/>
<dbReference type="Proteomes" id="UP000002445">
    <property type="component" value="Genome"/>
</dbReference>
<dbReference type="GO" id="GO:0033650">
    <property type="term" value="C:host cell mitochondrion"/>
    <property type="evidence" value="ECO:0007669"/>
    <property type="project" value="UniProtKB-SubCell"/>
</dbReference>
<dbReference type="GO" id="GO:0042025">
    <property type="term" value="C:host cell nucleus"/>
    <property type="evidence" value="ECO:0007669"/>
    <property type="project" value="UniProtKB-SubCell"/>
</dbReference>
<dbReference type="GO" id="GO:0006351">
    <property type="term" value="P:DNA-templated transcription"/>
    <property type="evidence" value="ECO:0007669"/>
    <property type="project" value="UniProtKB-UniRule"/>
</dbReference>
<dbReference type="GO" id="GO:0085033">
    <property type="term" value="P:symbiont-mediated activation of host NF-kappaB cascade"/>
    <property type="evidence" value="ECO:0007669"/>
    <property type="project" value="UniProtKB-UniRule"/>
</dbReference>
<dbReference type="GO" id="GO:0039592">
    <property type="term" value="P:symbiont-mediated arrest of host cell cycle during G2/M transition"/>
    <property type="evidence" value="ECO:0007669"/>
    <property type="project" value="UniProtKB-UniRule"/>
</dbReference>
<dbReference type="GO" id="GO:0019079">
    <property type="term" value="P:viral genome replication"/>
    <property type="evidence" value="ECO:0007669"/>
    <property type="project" value="UniProtKB-UniRule"/>
</dbReference>
<dbReference type="HAMAP" id="MF_04074">
    <property type="entry name" value="HBV_X"/>
    <property type="match status" value="1"/>
</dbReference>
<dbReference type="InterPro" id="IPR000236">
    <property type="entry name" value="Transactivation_prot_X"/>
</dbReference>
<dbReference type="Pfam" id="PF00739">
    <property type="entry name" value="X"/>
    <property type="match status" value="1"/>
</dbReference>
<feature type="chain" id="PRO_0000319917" description="Protein X">
    <location>
        <begin position="1"/>
        <end position="154"/>
    </location>
</feature>
<feature type="region of interest" description="Mitochondrial targeting sequence" evidence="1">
    <location>
        <begin position="68"/>
        <end position="117"/>
    </location>
</feature>
<feature type="helix" evidence="2">
    <location>
        <begin position="89"/>
        <end position="98"/>
    </location>
</feature>
<protein>
    <recommendedName>
        <fullName evidence="1">Protein X</fullName>
    </recommendedName>
    <alternativeName>
        <fullName evidence="1">HBx</fullName>
    </alternativeName>
    <alternativeName>
        <fullName evidence="1">Peptide X</fullName>
    </alternativeName>
    <alternativeName>
        <fullName evidence="1">pX</fullName>
    </alternativeName>
</protein>
<evidence type="ECO:0000255" key="1">
    <source>
        <dbReference type="HAMAP-Rule" id="MF_04074"/>
    </source>
</evidence>
<evidence type="ECO:0007829" key="2">
    <source>
        <dbReference type="PDB" id="3I7H"/>
    </source>
</evidence>
<organism>
    <name type="scientific">Hepatitis B virus genotype E (isolate Cote d'Ivoire/ABI-212/2003)</name>
    <name type="common">HBV-E</name>
    <dbReference type="NCBI Taxonomy" id="489498"/>
    <lineage>
        <taxon>Viruses</taxon>
        <taxon>Riboviria</taxon>
        <taxon>Pararnavirae</taxon>
        <taxon>Artverviricota</taxon>
        <taxon>Revtraviricetes</taxon>
        <taxon>Blubervirales</taxon>
        <taxon>Hepadnaviridae</taxon>
        <taxon>Orthohepadnavirus</taxon>
        <taxon>Hepatitis B virus</taxon>
        <taxon>hepatitis B virus genotype E</taxon>
    </lineage>
</organism>
<organismHost>
    <name type="scientific">Homo sapiens</name>
    <name type="common">Human</name>
    <dbReference type="NCBI Taxonomy" id="9606"/>
</organismHost>
<organismHost>
    <name type="scientific">Pan troglodytes</name>
    <name type="common">Chimpanzee</name>
    <dbReference type="NCBI Taxonomy" id="9598"/>
</organismHost>
<proteinExistence type="evidence at protein level"/>
<keyword id="KW-0002">3D-structure</keyword>
<keyword id="KW-1074">Activation of host NF-kappa-B by virus</keyword>
<keyword id="KW-0010">Activator</keyword>
<keyword id="KW-0053">Apoptosis</keyword>
<keyword id="KW-1035">Host cytoplasm</keyword>
<keyword id="KW-1079">Host G2/M cell cycle arrest by virus</keyword>
<keyword id="KW-1045">Host mitochondrion</keyword>
<keyword id="KW-1048">Host nucleus</keyword>
<keyword id="KW-0945">Host-virus interaction</keyword>
<keyword id="KW-1121">Modulation of host cell cycle by virus</keyword>
<keyword id="KW-0804">Transcription</keyword>
<keyword id="KW-0805">Transcription regulation</keyword>
<gene>
    <name evidence="1" type="primary">X</name>
</gene>
<comment type="function">
    <text evidence="1">Multifunctional protein that plays a role in silencing host antiviral defenses and promoting viral transcription. Does not seem to be essential for HBV infection. May be directly involved in development of cirrhosis and liver cancer (hepatocellular carcinoma). Most of cytosolic activities involve modulation of cytosolic calcium. The effect on apoptosis is controversial depending on the cell types in which the studies have been conducted. May induce apoptosis by localizing in mitochondria and causing loss of mitochondrial membrane potential. May also modulate apoptosis by binding host CFLAR, a key regulator of the death-inducing signaling complex (DISC). Promotes viral transcription by using the host E3 ubiquitin ligase DDB1 to target the SMC5-SMC6 complex to proteasomal degradation. This host complex would otherwise bind to viral episomal DNA, and prevents its transcription. Moderately stimulates transcription of many different viral and cellular transcription elements. Promoters and enhancers stimulated by HBx contain DNA binding sites for NF-kappa-B, AP-1, AP-2, c-EBP, ATF/CREB, or the calcium-activated factor NF-AT.</text>
</comment>
<comment type="subunit">
    <text evidence="1">May form homodimer. May interact with host CEBPA, CFLAR, CREB1, DDB1, E4F1, HBXIP, HSPD1/HSP60, NFKBIA, POLR2E and SMAD4. Interacts with host SMC5-SMC6 complex and induces its degradation. Interacts with host TRPC4AP; leading to prevent ubiquitination of TRPC4AP. Interacts with host PLSCR1; this interaction promotes ubiquitination and degradation of HBx and impairs HBx-mediated cell proliferation.</text>
</comment>
<comment type="subcellular location">
    <subcellularLocation>
        <location evidence="1">Host cytoplasm</location>
    </subcellularLocation>
    <subcellularLocation>
        <location evidence="1">Host nucleus</location>
    </subcellularLocation>
    <subcellularLocation>
        <location evidence="1">Host mitochondrion</location>
    </subcellularLocation>
    <text evidence="1">Mainly cytoplasmic as only a fraction is detected in the nucleus. In cytoplasm, a minor fraction associates with mitochondria or proteasomes.</text>
</comment>
<comment type="PTM">
    <text evidence="1">A fraction may be phosphorylated in insect cells and HepG2 cells, a human hepatoblastoma cell line. Phosphorylated in vitro by host protein kinase C or mitogen-activated protein kinase. N-acetylated in insect cells.</text>
</comment>
<comment type="similarity">
    <text evidence="1">Belongs to the orthohepadnavirus protein X family.</text>
</comment>
<comment type="caution">
    <text>Transcriptional activities should be taken with a grain of salt. As of 2007, all studies demonstrating in vivo interaction between protein X and transcriptional components were performed with significant overexpression of both proteins and in the absence of viral infection.</text>
</comment>